<reference key="1">
    <citation type="journal article" date="2010" name="PLoS ONE">
        <title>The complete multipartite genome sequence of Cupriavidus necator JMP134, a versatile pollutant degrader.</title>
        <authorList>
            <person name="Lykidis A."/>
            <person name="Perez-Pantoja D."/>
            <person name="Ledger T."/>
            <person name="Mavromatis K."/>
            <person name="Anderson I.J."/>
            <person name="Ivanova N.N."/>
            <person name="Hooper S.D."/>
            <person name="Lapidus A."/>
            <person name="Lucas S."/>
            <person name="Gonzalez B."/>
            <person name="Kyrpides N.C."/>
        </authorList>
    </citation>
    <scope>NUCLEOTIDE SEQUENCE [LARGE SCALE GENOMIC DNA]</scope>
    <source>
        <strain>JMP134 / LMG 1197</strain>
    </source>
</reference>
<accession>Q46XM7</accession>
<name>SYI_CUPPJ</name>
<feature type="chain" id="PRO_0000098452" description="Isoleucine--tRNA ligase">
    <location>
        <begin position="1"/>
        <end position="963"/>
    </location>
</feature>
<feature type="short sequence motif" description="'HIGH' region">
    <location>
        <begin position="66"/>
        <end position="76"/>
    </location>
</feature>
<feature type="short sequence motif" description="'KMSKS' region">
    <location>
        <begin position="637"/>
        <end position="641"/>
    </location>
</feature>
<feature type="binding site" evidence="1">
    <location>
        <position position="596"/>
    </location>
    <ligand>
        <name>L-isoleucyl-5'-AMP</name>
        <dbReference type="ChEBI" id="CHEBI:178002"/>
    </ligand>
</feature>
<feature type="binding site" evidence="1">
    <location>
        <position position="640"/>
    </location>
    <ligand>
        <name>ATP</name>
        <dbReference type="ChEBI" id="CHEBI:30616"/>
    </ligand>
</feature>
<feature type="binding site" evidence="1">
    <location>
        <position position="926"/>
    </location>
    <ligand>
        <name>Zn(2+)</name>
        <dbReference type="ChEBI" id="CHEBI:29105"/>
    </ligand>
</feature>
<feature type="binding site" evidence="1">
    <location>
        <position position="929"/>
    </location>
    <ligand>
        <name>Zn(2+)</name>
        <dbReference type="ChEBI" id="CHEBI:29105"/>
    </ligand>
</feature>
<feature type="binding site" evidence="1">
    <location>
        <position position="946"/>
    </location>
    <ligand>
        <name>Zn(2+)</name>
        <dbReference type="ChEBI" id="CHEBI:29105"/>
    </ligand>
</feature>
<feature type="binding site" evidence="1">
    <location>
        <position position="949"/>
    </location>
    <ligand>
        <name>Zn(2+)</name>
        <dbReference type="ChEBI" id="CHEBI:29105"/>
    </ligand>
</feature>
<comment type="function">
    <text evidence="1">Catalyzes the attachment of isoleucine to tRNA(Ile). As IleRS can inadvertently accommodate and process structurally similar amino acids such as valine, to avoid such errors it has two additional distinct tRNA(Ile)-dependent editing activities. One activity is designated as 'pretransfer' editing and involves the hydrolysis of activated Val-AMP. The other activity is designated 'posttransfer' editing and involves deacylation of mischarged Val-tRNA(Ile).</text>
</comment>
<comment type="catalytic activity">
    <reaction evidence="1">
        <text>tRNA(Ile) + L-isoleucine + ATP = L-isoleucyl-tRNA(Ile) + AMP + diphosphate</text>
        <dbReference type="Rhea" id="RHEA:11060"/>
        <dbReference type="Rhea" id="RHEA-COMP:9666"/>
        <dbReference type="Rhea" id="RHEA-COMP:9695"/>
        <dbReference type="ChEBI" id="CHEBI:30616"/>
        <dbReference type="ChEBI" id="CHEBI:33019"/>
        <dbReference type="ChEBI" id="CHEBI:58045"/>
        <dbReference type="ChEBI" id="CHEBI:78442"/>
        <dbReference type="ChEBI" id="CHEBI:78528"/>
        <dbReference type="ChEBI" id="CHEBI:456215"/>
        <dbReference type="EC" id="6.1.1.5"/>
    </reaction>
</comment>
<comment type="cofactor">
    <cofactor evidence="1">
        <name>Zn(2+)</name>
        <dbReference type="ChEBI" id="CHEBI:29105"/>
    </cofactor>
    <text evidence="1">Binds 1 zinc ion per subunit.</text>
</comment>
<comment type="subunit">
    <text evidence="1">Monomer.</text>
</comment>
<comment type="subcellular location">
    <subcellularLocation>
        <location evidence="1">Cytoplasm</location>
    </subcellularLocation>
</comment>
<comment type="domain">
    <text evidence="1">IleRS has two distinct active sites: one for aminoacylation and one for editing. The misactivated valine is translocated from the active site to the editing site, which sterically excludes the correctly activated isoleucine. The single editing site contains two valyl binding pockets, one specific for each substrate (Val-AMP or Val-tRNA(Ile)).</text>
</comment>
<comment type="similarity">
    <text evidence="1">Belongs to the class-I aminoacyl-tRNA synthetase family. IleS type 1 subfamily.</text>
</comment>
<comment type="sequence caution" evidence="2">
    <conflict type="erroneous initiation">
        <sequence resource="EMBL-CDS" id="AAZ62106"/>
    </conflict>
</comment>
<sequence>MSDDKRAKPEKSKYPVNLLDTTFPMRGDLPKREPQWVKQWQDKQLYKKIRAARKGAKKFVLHDGPPYANGDIHIGHAVNKVLKDMIVKARGLSGLDAVYVPGWDCHGMPIEIQIEKQFGKGLPVQEVQAKARAYATEQIKRQMVDFERLGVLGDWGHPYLTMNYSNEADELRALGKIMEKGYVFRGLKPVNWCFDCGSALAEAEVEYKDKVDLSIDVGFPFAETDKLAHAFKLSIEQLNAKPGWIVIWTTTPWTIPSNQALNVHPEVEYALVDTPRGYLILATERVEEQLKIYELEGKVVATTTGAALSEIRFHHPLAKMDTGYDRLSPIYLGDYVTTDTGSGIVHSAPAYGVEDFQSCKAHGMSDHDIISPVMGNGVYAGTLPLFGGLSIWDANPKIVEVLKASGNLFNSHKYTHSYMHCWRHKTPIIYRATSQWFAGMDVDPVEQDGKAVPTLRETALAGIEATEFYPSWGKQRLHNMIANRPDWTLSRQRQWGVPMAFFVHKETGALHPRTAELLEEVARRVEQHGIEAWQTLDPKDLLGDEADQYEKNRDTLDVWFDSGTTHWTVIRGSHRDDLYDPSADEADGRLADLYLEGSDQHRGWFHSSLLTASMLYGKPPYKALLTHGFTVDGEGRKMSKSVGNTVSPQDIANKMGAEIIRLWVASTDYSGELSISDEILKRVVESYRRIRNTLRFLLSNLSDYDHSKHALPASEWLEIDRYAVALTERLQKEVLSHYDSYEFHPVVAKLQTFCSEDLGGFYLDVLKDRLYTTAADSKARRAAQNALYHITQAMLHWMAPFLSFTAEEAWQVFAHGTGHTDTIFTSTYYTLPEVDQADDLLQKWHSLREVRAEVTKQLEAVRVEGAIGSSLQAEVNIQAGGPVLAALQSLEDDLRFVLLTSAATVTPAPEAGDLLVTVTASTHAKCERCWHYRADVGQNPDHPTLCGRCDSNLFGAGEHRSHA</sequence>
<keyword id="KW-0030">Aminoacyl-tRNA synthetase</keyword>
<keyword id="KW-0067">ATP-binding</keyword>
<keyword id="KW-0963">Cytoplasm</keyword>
<keyword id="KW-0436">Ligase</keyword>
<keyword id="KW-0479">Metal-binding</keyword>
<keyword id="KW-0547">Nucleotide-binding</keyword>
<keyword id="KW-0648">Protein biosynthesis</keyword>
<keyword id="KW-0862">Zinc</keyword>
<proteinExistence type="inferred from homology"/>
<evidence type="ECO:0000255" key="1">
    <source>
        <dbReference type="HAMAP-Rule" id="MF_02002"/>
    </source>
</evidence>
<evidence type="ECO:0000305" key="2"/>
<dbReference type="EC" id="6.1.1.5" evidence="1"/>
<dbReference type="EMBL" id="CP000090">
    <property type="protein sequence ID" value="AAZ62106.1"/>
    <property type="status" value="ALT_INIT"/>
    <property type="molecule type" value="Genomic_DNA"/>
</dbReference>
<dbReference type="SMR" id="Q46XM7"/>
<dbReference type="STRING" id="264198.Reut_A2745"/>
<dbReference type="KEGG" id="reu:Reut_A2745"/>
<dbReference type="eggNOG" id="COG0060">
    <property type="taxonomic scope" value="Bacteria"/>
</dbReference>
<dbReference type="HOGENOM" id="CLU_001493_7_1_4"/>
<dbReference type="OrthoDB" id="9810365at2"/>
<dbReference type="GO" id="GO:0005829">
    <property type="term" value="C:cytosol"/>
    <property type="evidence" value="ECO:0007669"/>
    <property type="project" value="TreeGrafter"/>
</dbReference>
<dbReference type="GO" id="GO:0002161">
    <property type="term" value="F:aminoacyl-tRNA deacylase activity"/>
    <property type="evidence" value="ECO:0007669"/>
    <property type="project" value="InterPro"/>
</dbReference>
<dbReference type="GO" id="GO:0005524">
    <property type="term" value="F:ATP binding"/>
    <property type="evidence" value="ECO:0007669"/>
    <property type="project" value="UniProtKB-UniRule"/>
</dbReference>
<dbReference type="GO" id="GO:0004822">
    <property type="term" value="F:isoleucine-tRNA ligase activity"/>
    <property type="evidence" value="ECO:0007669"/>
    <property type="project" value="UniProtKB-UniRule"/>
</dbReference>
<dbReference type="GO" id="GO:0000049">
    <property type="term" value="F:tRNA binding"/>
    <property type="evidence" value="ECO:0007669"/>
    <property type="project" value="InterPro"/>
</dbReference>
<dbReference type="GO" id="GO:0008270">
    <property type="term" value="F:zinc ion binding"/>
    <property type="evidence" value="ECO:0007669"/>
    <property type="project" value="UniProtKB-UniRule"/>
</dbReference>
<dbReference type="GO" id="GO:0006428">
    <property type="term" value="P:isoleucyl-tRNA aminoacylation"/>
    <property type="evidence" value="ECO:0007669"/>
    <property type="project" value="UniProtKB-UniRule"/>
</dbReference>
<dbReference type="CDD" id="cd07960">
    <property type="entry name" value="Anticodon_Ia_Ile_BEm"/>
    <property type="match status" value="1"/>
</dbReference>
<dbReference type="CDD" id="cd00818">
    <property type="entry name" value="IleRS_core"/>
    <property type="match status" value="1"/>
</dbReference>
<dbReference type="FunFam" id="3.40.50.620:FF:000042">
    <property type="entry name" value="Isoleucine--tRNA ligase"/>
    <property type="match status" value="1"/>
</dbReference>
<dbReference type="FunFam" id="3.40.50.620:FF:000048">
    <property type="entry name" value="Isoleucine--tRNA ligase"/>
    <property type="match status" value="1"/>
</dbReference>
<dbReference type="Gene3D" id="1.10.730.20">
    <property type="match status" value="1"/>
</dbReference>
<dbReference type="Gene3D" id="3.40.50.620">
    <property type="entry name" value="HUPs"/>
    <property type="match status" value="2"/>
</dbReference>
<dbReference type="Gene3D" id="3.90.740.10">
    <property type="entry name" value="Valyl/Leucyl/Isoleucyl-tRNA synthetase, editing domain"/>
    <property type="match status" value="1"/>
</dbReference>
<dbReference type="HAMAP" id="MF_02002">
    <property type="entry name" value="Ile_tRNA_synth_type1"/>
    <property type="match status" value="1"/>
</dbReference>
<dbReference type="InterPro" id="IPR001412">
    <property type="entry name" value="aa-tRNA-synth_I_CS"/>
</dbReference>
<dbReference type="InterPro" id="IPR002300">
    <property type="entry name" value="aa-tRNA-synth_Ia"/>
</dbReference>
<dbReference type="InterPro" id="IPR033708">
    <property type="entry name" value="Anticodon_Ile_BEm"/>
</dbReference>
<dbReference type="InterPro" id="IPR002301">
    <property type="entry name" value="Ile-tRNA-ligase"/>
</dbReference>
<dbReference type="InterPro" id="IPR023585">
    <property type="entry name" value="Ile-tRNA-ligase_type1"/>
</dbReference>
<dbReference type="InterPro" id="IPR050081">
    <property type="entry name" value="Ile-tRNA_ligase"/>
</dbReference>
<dbReference type="InterPro" id="IPR013155">
    <property type="entry name" value="M/V/L/I-tRNA-synth_anticd-bd"/>
</dbReference>
<dbReference type="InterPro" id="IPR014729">
    <property type="entry name" value="Rossmann-like_a/b/a_fold"/>
</dbReference>
<dbReference type="InterPro" id="IPR009080">
    <property type="entry name" value="tRNAsynth_Ia_anticodon-bd"/>
</dbReference>
<dbReference type="InterPro" id="IPR009008">
    <property type="entry name" value="Val/Leu/Ile-tRNA-synth_edit"/>
</dbReference>
<dbReference type="InterPro" id="IPR010663">
    <property type="entry name" value="Znf_FPG/IleRS"/>
</dbReference>
<dbReference type="NCBIfam" id="TIGR00392">
    <property type="entry name" value="ileS"/>
    <property type="match status" value="1"/>
</dbReference>
<dbReference type="PANTHER" id="PTHR42765:SF1">
    <property type="entry name" value="ISOLEUCINE--TRNA LIGASE, MITOCHONDRIAL"/>
    <property type="match status" value="1"/>
</dbReference>
<dbReference type="PANTHER" id="PTHR42765">
    <property type="entry name" value="SOLEUCYL-TRNA SYNTHETASE"/>
    <property type="match status" value="1"/>
</dbReference>
<dbReference type="Pfam" id="PF08264">
    <property type="entry name" value="Anticodon_1"/>
    <property type="match status" value="1"/>
</dbReference>
<dbReference type="Pfam" id="PF00133">
    <property type="entry name" value="tRNA-synt_1"/>
    <property type="match status" value="1"/>
</dbReference>
<dbReference type="Pfam" id="PF06827">
    <property type="entry name" value="zf-FPG_IleRS"/>
    <property type="match status" value="1"/>
</dbReference>
<dbReference type="PRINTS" id="PR00984">
    <property type="entry name" value="TRNASYNTHILE"/>
</dbReference>
<dbReference type="SUPFAM" id="SSF47323">
    <property type="entry name" value="Anticodon-binding domain of a subclass of class I aminoacyl-tRNA synthetases"/>
    <property type="match status" value="1"/>
</dbReference>
<dbReference type="SUPFAM" id="SSF52374">
    <property type="entry name" value="Nucleotidylyl transferase"/>
    <property type="match status" value="1"/>
</dbReference>
<dbReference type="SUPFAM" id="SSF50677">
    <property type="entry name" value="ValRS/IleRS/LeuRS editing domain"/>
    <property type="match status" value="1"/>
</dbReference>
<dbReference type="PROSITE" id="PS00178">
    <property type="entry name" value="AA_TRNA_LIGASE_I"/>
    <property type="match status" value="1"/>
</dbReference>
<organism>
    <name type="scientific">Cupriavidus pinatubonensis (strain JMP 134 / LMG 1197)</name>
    <name type="common">Cupriavidus necator (strain JMP 134)</name>
    <dbReference type="NCBI Taxonomy" id="264198"/>
    <lineage>
        <taxon>Bacteria</taxon>
        <taxon>Pseudomonadati</taxon>
        <taxon>Pseudomonadota</taxon>
        <taxon>Betaproteobacteria</taxon>
        <taxon>Burkholderiales</taxon>
        <taxon>Burkholderiaceae</taxon>
        <taxon>Cupriavidus</taxon>
    </lineage>
</organism>
<gene>
    <name evidence="1" type="primary">ileS</name>
    <name type="ordered locus">Reut_A2745</name>
</gene>
<protein>
    <recommendedName>
        <fullName evidence="1">Isoleucine--tRNA ligase</fullName>
        <ecNumber evidence="1">6.1.1.5</ecNumber>
    </recommendedName>
    <alternativeName>
        <fullName evidence="1">Isoleucyl-tRNA synthetase</fullName>
        <shortName evidence="1">IleRS</shortName>
    </alternativeName>
</protein>